<dbReference type="EC" id="2.1.1.166" evidence="1"/>
<dbReference type="EMBL" id="AL513382">
    <property type="protein sequence ID" value="CAD07814.1"/>
    <property type="molecule type" value="Genomic_DNA"/>
</dbReference>
<dbReference type="EMBL" id="AE014613">
    <property type="protein sequence ID" value="AAO70750.1"/>
    <property type="molecule type" value="Genomic_DNA"/>
</dbReference>
<dbReference type="RefSeq" id="NP_457676.1">
    <property type="nucleotide sequence ID" value="NC_003198.1"/>
</dbReference>
<dbReference type="RefSeq" id="WP_000145971.1">
    <property type="nucleotide sequence ID" value="NZ_WSUR01000003.1"/>
</dbReference>
<dbReference type="SMR" id="Q8Z3H3"/>
<dbReference type="STRING" id="220341.gene:17587327"/>
<dbReference type="KEGG" id="stt:t3214"/>
<dbReference type="KEGG" id="sty:STY3475"/>
<dbReference type="PATRIC" id="fig|220341.7.peg.3538"/>
<dbReference type="eggNOG" id="COG0293">
    <property type="taxonomic scope" value="Bacteria"/>
</dbReference>
<dbReference type="HOGENOM" id="CLU_009422_4_0_6"/>
<dbReference type="OMA" id="HRQTDHL"/>
<dbReference type="OrthoDB" id="9790080at2"/>
<dbReference type="Proteomes" id="UP000000541">
    <property type="component" value="Chromosome"/>
</dbReference>
<dbReference type="Proteomes" id="UP000002670">
    <property type="component" value="Chromosome"/>
</dbReference>
<dbReference type="GO" id="GO:0005737">
    <property type="term" value="C:cytoplasm"/>
    <property type="evidence" value="ECO:0007669"/>
    <property type="project" value="UniProtKB-SubCell"/>
</dbReference>
<dbReference type="GO" id="GO:0008650">
    <property type="term" value="F:rRNA (uridine-2'-O-)-methyltransferase activity"/>
    <property type="evidence" value="ECO:0007669"/>
    <property type="project" value="UniProtKB-UniRule"/>
</dbReference>
<dbReference type="CDD" id="cd02440">
    <property type="entry name" value="AdoMet_MTases"/>
    <property type="match status" value="1"/>
</dbReference>
<dbReference type="FunFam" id="3.40.50.150:FF:000005">
    <property type="entry name" value="Ribosomal RNA large subunit methyltransferase E"/>
    <property type="match status" value="1"/>
</dbReference>
<dbReference type="Gene3D" id="3.40.50.150">
    <property type="entry name" value="Vaccinia Virus protein VP39"/>
    <property type="match status" value="1"/>
</dbReference>
<dbReference type="HAMAP" id="MF_01547">
    <property type="entry name" value="RNA_methyltr_E"/>
    <property type="match status" value="1"/>
</dbReference>
<dbReference type="InterPro" id="IPR050082">
    <property type="entry name" value="RNA_methyltr_RlmE"/>
</dbReference>
<dbReference type="InterPro" id="IPR002877">
    <property type="entry name" value="RNA_MeTrfase_FtsJ_dom"/>
</dbReference>
<dbReference type="InterPro" id="IPR015507">
    <property type="entry name" value="rRNA-MeTfrase_E"/>
</dbReference>
<dbReference type="InterPro" id="IPR004512">
    <property type="entry name" value="rRNA_MeTrfase_gammaproteobac"/>
</dbReference>
<dbReference type="InterPro" id="IPR029063">
    <property type="entry name" value="SAM-dependent_MTases_sf"/>
</dbReference>
<dbReference type="NCBIfam" id="NF008390">
    <property type="entry name" value="PRK11188.1"/>
    <property type="match status" value="1"/>
</dbReference>
<dbReference type="NCBIfam" id="TIGR00438">
    <property type="entry name" value="rrmJ"/>
    <property type="match status" value="1"/>
</dbReference>
<dbReference type="PANTHER" id="PTHR10920">
    <property type="entry name" value="RIBOSOMAL RNA METHYLTRANSFERASE"/>
    <property type="match status" value="1"/>
</dbReference>
<dbReference type="PANTHER" id="PTHR10920:SF18">
    <property type="entry name" value="RRNA METHYLTRANSFERASE 2, MITOCHONDRIAL"/>
    <property type="match status" value="1"/>
</dbReference>
<dbReference type="Pfam" id="PF01728">
    <property type="entry name" value="FtsJ"/>
    <property type="match status" value="1"/>
</dbReference>
<dbReference type="PIRSF" id="PIRSF005461">
    <property type="entry name" value="23S_rRNA_mtase"/>
    <property type="match status" value="1"/>
</dbReference>
<dbReference type="SUPFAM" id="SSF53335">
    <property type="entry name" value="S-adenosyl-L-methionine-dependent methyltransferases"/>
    <property type="match status" value="1"/>
</dbReference>
<reference key="1">
    <citation type="journal article" date="2001" name="Nature">
        <title>Complete genome sequence of a multiple drug resistant Salmonella enterica serovar Typhi CT18.</title>
        <authorList>
            <person name="Parkhill J."/>
            <person name="Dougan G."/>
            <person name="James K.D."/>
            <person name="Thomson N.R."/>
            <person name="Pickard D."/>
            <person name="Wain J."/>
            <person name="Churcher C.M."/>
            <person name="Mungall K.L."/>
            <person name="Bentley S.D."/>
            <person name="Holden M.T.G."/>
            <person name="Sebaihia M."/>
            <person name="Baker S."/>
            <person name="Basham D."/>
            <person name="Brooks K."/>
            <person name="Chillingworth T."/>
            <person name="Connerton P."/>
            <person name="Cronin A."/>
            <person name="Davis P."/>
            <person name="Davies R.M."/>
            <person name="Dowd L."/>
            <person name="White N."/>
            <person name="Farrar J."/>
            <person name="Feltwell T."/>
            <person name="Hamlin N."/>
            <person name="Haque A."/>
            <person name="Hien T.T."/>
            <person name="Holroyd S."/>
            <person name="Jagels K."/>
            <person name="Krogh A."/>
            <person name="Larsen T.S."/>
            <person name="Leather S."/>
            <person name="Moule S."/>
            <person name="O'Gaora P."/>
            <person name="Parry C."/>
            <person name="Quail M.A."/>
            <person name="Rutherford K.M."/>
            <person name="Simmonds M."/>
            <person name="Skelton J."/>
            <person name="Stevens K."/>
            <person name="Whitehead S."/>
            <person name="Barrell B.G."/>
        </authorList>
    </citation>
    <scope>NUCLEOTIDE SEQUENCE [LARGE SCALE GENOMIC DNA]</scope>
    <source>
        <strain>CT18</strain>
    </source>
</reference>
<reference key="2">
    <citation type="journal article" date="2003" name="J. Bacteriol.">
        <title>Comparative genomics of Salmonella enterica serovar Typhi strains Ty2 and CT18.</title>
        <authorList>
            <person name="Deng W."/>
            <person name="Liou S.-R."/>
            <person name="Plunkett G. III"/>
            <person name="Mayhew G.F."/>
            <person name="Rose D.J."/>
            <person name="Burland V."/>
            <person name="Kodoyianni V."/>
            <person name="Schwartz D.C."/>
            <person name="Blattner F.R."/>
        </authorList>
    </citation>
    <scope>NUCLEOTIDE SEQUENCE [LARGE SCALE GENOMIC DNA]</scope>
    <source>
        <strain>ATCC 700931 / Ty2</strain>
    </source>
</reference>
<organism>
    <name type="scientific">Salmonella typhi</name>
    <dbReference type="NCBI Taxonomy" id="90370"/>
    <lineage>
        <taxon>Bacteria</taxon>
        <taxon>Pseudomonadati</taxon>
        <taxon>Pseudomonadota</taxon>
        <taxon>Gammaproteobacteria</taxon>
        <taxon>Enterobacterales</taxon>
        <taxon>Enterobacteriaceae</taxon>
        <taxon>Salmonella</taxon>
    </lineage>
</organism>
<proteinExistence type="inferred from homology"/>
<protein>
    <recommendedName>
        <fullName evidence="1">Ribosomal RNA large subunit methyltransferase E</fullName>
        <ecNumber evidence="1">2.1.1.166</ecNumber>
    </recommendedName>
    <alternativeName>
        <fullName evidence="1">23S rRNA Um2552 methyltransferase</fullName>
    </alternativeName>
    <alternativeName>
        <fullName evidence="1">rRNA (uridine-2'-O-)-methyltransferase</fullName>
    </alternativeName>
</protein>
<comment type="function">
    <text evidence="1">Specifically methylates the uridine in position 2552 of 23S rRNA at the 2'-O position of the ribose in the fully assembled 50S ribosomal subunit.</text>
</comment>
<comment type="catalytic activity">
    <reaction evidence="1">
        <text>uridine(2552) in 23S rRNA + S-adenosyl-L-methionine = 2'-O-methyluridine(2552) in 23S rRNA + S-adenosyl-L-homocysteine + H(+)</text>
        <dbReference type="Rhea" id="RHEA:42720"/>
        <dbReference type="Rhea" id="RHEA-COMP:10202"/>
        <dbReference type="Rhea" id="RHEA-COMP:10203"/>
        <dbReference type="ChEBI" id="CHEBI:15378"/>
        <dbReference type="ChEBI" id="CHEBI:57856"/>
        <dbReference type="ChEBI" id="CHEBI:59789"/>
        <dbReference type="ChEBI" id="CHEBI:65315"/>
        <dbReference type="ChEBI" id="CHEBI:74478"/>
        <dbReference type="EC" id="2.1.1.166"/>
    </reaction>
</comment>
<comment type="subcellular location">
    <subcellularLocation>
        <location evidence="1">Cytoplasm</location>
    </subcellularLocation>
</comment>
<comment type="similarity">
    <text evidence="1">Belongs to the class I-like SAM-binding methyltransferase superfamily. RNA methyltransferase RlmE family.</text>
</comment>
<sequence>MTGKKRSASSSRWLQEHFSDKYVQQAQKKGLRSRAWFKLDEIQQSDKLFKPGMTVVDLGAAPGGWSQYVVTQIGGKGRIIACDLLPMDPIVGVDFLQGDFRDELVMKALLERVGDSKVQVVMSDMAPNMSGTPAVDIPRAMYLVELALDMCRDVLAPGGSFVVKVFQGEGFDEYLREIRSLFTKVKVRKPDSSRARSREVYIVATGRK</sequence>
<feature type="chain" id="PRO_0000155538" description="Ribosomal RNA large subunit methyltransferase E">
    <location>
        <begin position="1"/>
        <end position="208"/>
    </location>
</feature>
<feature type="active site" description="Proton acceptor" evidence="1">
    <location>
        <position position="164"/>
    </location>
</feature>
<feature type="binding site" evidence="1">
    <location>
        <position position="63"/>
    </location>
    <ligand>
        <name>S-adenosyl-L-methionine</name>
        <dbReference type="ChEBI" id="CHEBI:59789"/>
    </ligand>
</feature>
<feature type="binding site" evidence="1">
    <location>
        <position position="65"/>
    </location>
    <ligand>
        <name>S-adenosyl-L-methionine</name>
        <dbReference type="ChEBI" id="CHEBI:59789"/>
    </ligand>
</feature>
<feature type="binding site" evidence="1">
    <location>
        <position position="83"/>
    </location>
    <ligand>
        <name>S-adenosyl-L-methionine</name>
        <dbReference type="ChEBI" id="CHEBI:59789"/>
    </ligand>
</feature>
<feature type="binding site" evidence="1">
    <location>
        <position position="99"/>
    </location>
    <ligand>
        <name>S-adenosyl-L-methionine</name>
        <dbReference type="ChEBI" id="CHEBI:59789"/>
    </ligand>
</feature>
<feature type="binding site" evidence="1">
    <location>
        <position position="124"/>
    </location>
    <ligand>
        <name>S-adenosyl-L-methionine</name>
        <dbReference type="ChEBI" id="CHEBI:59789"/>
    </ligand>
</feature>
<name>RLME_SALTI</name>
<keyword id="KW-0963">Cytoplasm</keyword>
<keyword id="KW-0489">Methyltransferase</keyword>
<keyword id="KW-0698">rRNA processing</keyword>
<keyword id="KW-0949">S-adenosyl-L-methionine</keyword>
<keyword id="KW-0808">Transferase</keyword>
<accession>Q8Z3H3</accession>
<accession>Q7C705</accession>
<evidence type="ECO:0000255" key="1">
    <source>
        <dbReference type="HAMAP-Rule" id="MF_01547"/>
    </source>
</evidence>
<gene>
    <name evidence="1" type="primary">rlmE</name>
    <name evidence="1" type="synonym">ftsJ</name>
    <name evidence="1" type="synonym">rrmJ</name>
    <name type="ordered locus">STY3475</name>
    <name type="ordered locus">t3214</name>
</gene>